<organism>
    <name type="scientific">Laribacter hongkongensis (strain HLHK9)</name>
    <dbReference type="NCBI Taxonomy" id="557598"/>
    <lineage>
        <taxon>Bacteria</taxon>
        <taxon>Pseudomonadati</taxon>
        <taxon>Pseudomonadota</taxon>
        <taxon>Betaproteobacteria</taxon>
        <taxon>Neisseriales</taxon>
        <taxon>Aquaspirillaceae</taxon>
        <taxon>Laribacter</taxon>
    </lineage>
</organism>
<reference key="1">
    <citation type="journal article" date="2009" name="PLoS Genet.">
        <title>The complete genome and proteome of Laribacter hongkongensis reveal potential mechanisms for adaptations to different temperatures and habitats.</title>
        <authorList>
            <person name="Woo P.C.Y."/>
            <person name="Lau S.K.P."/>
            <person name="Tse H."/>
            <person name="Teng J.L.L."/>
            <person name="Curreem S.O."/>
            <person name="Tsang A.K.L."/>
            <person name="Fan R.Y.Y."/>
            <person name="Wong G.K.M."/>
            <person name="Huang Y."/>
            <person name="Loman N.J."/>
            <person name="Snyder L.A.S."/>
            <person name="Cai J.J."/>
            <person name="Huang J.-D."/>
            <person name="Mak W."/>
            <person name="Pallen M.J."/>
            <person name="Lok S."/>
            <person name="Yuen K.-Y."/>
        </authorList>
    </citation>
    <scope>NUCLEOTIDE SEQUENCE [LARGE SCALE GENOMIC DNA]</scope>
    <source>
        <strain>HLHK9</strain>
    </source>
</reference>
<comment type="catalytic activity">
    <reaction evidence="1">
        <text>D-erythro-1-(imidazol-4-yl)glycerol 3-phosphate = 3-(imidazol-4-yl)-2-oxopropyl phosphate + H2O</text>
        <dbReference type="Rhea" id="RHEA:11040"/>
        <dbReference type="ChEBI" id="CHEBI:15377"/>
        <dbReference type="ChEBI" id="CHEBI:57766"/>
        <dbReference type="ChEBI" id="CHEBI:58278"/>
        <dbReference type="EC" id="4.2.1.19"/>
    </reaction>
</comment>
<comment type="pathway">
    <text evidence="1">Amino-acid biosynthesis; L-histidine biosynthesis; L-histidine from 5-phospho-alpha-D-ribose 1-diphosphate: step 6/9.</text>
</comment>
<comment type="subcellular location">
    <subcellularLocation>
        <location evidence="1">Cytoplasm</location>
    </subcellularLocation>
</comment>
<comment type="similarity">
    <text evidence="1">Belongs to the imidazoleglycerol-phosphate dehydratase family.</text>
</comment>
<keyword id="KW-0028">Amino-acid biosynthesis</keyword>
<keyword id="KW-0963">Cytoplasm</keyword>
<keyword id="KW-0368">Histidine biosynthesis</keyword>
<keyword id="KW-0456">Lyase</keyword>
<keyword id="KW-1185">Reference proteome</keyword>
<name>HIS7_LARHH</name>
<sequence>MRQATVTRNTLETRITVSLNLDGSGQARFDTGVPFLEHMLDQIARHGLIDLDITAQGDLHIDAHHTVEDLGITLGQAFARAIGDKKGIRRYGHAYVPLDEALSRVVLDLSGRPGLEYHVDYTRATIGSFDVDLFSEFFHGFVNHAMVTLHIDNLRGINSHHQAETIFKAFGRALRMAVEPDPRMAGVTPSTKGTLTA</sequence>
<evidence type="ECO:0000255" key="1">
    <source>
        <dbReference type="HAMAP-Rule" id="MF_00076"/>
    </source>
</evidence>
<gene>
    <name evidence="1" type="primary">hisB</name>
    <name type="ordered locus">LHK_00186</name>
</gene>
<protein>
    <recommendedName>
        <fullName evidence="1">Imidazoleglycerol-phosphate dehydratase</fullName>
        <shortName evidence="1">IGPD</shortName>
        <ecNumber evidence="1">4.2.1.19</ecNumber>
    </recommendedName>
</protein>
<feature type="chain" id="PRO_1000190614" description="Imidazoleglycerol-phosphate dehydratase">
    <location>
        <begin position="1"/>
        <end position="197"/>
    </location>
</feature>
<proteinExistence type="inferred from homology"/>
<dbReference type="EC" id="4.2.1.19" evidence="1"/>
<dbReference type="EMBL" id="CP001154">
    <property type="protein sequence ID" value="ACO73182.1"/>
    <property type="molecule type" value="Genomic_DNA"/>
</dbReference>
<dbReference type="RefSeq" id="WP_012695677.1">
    <property type="nucleotide sequence ID" value="NC_012559.1"/>
</dbReference>
<dbReference type="SMR" id="C1DAK1"/>
<dbReference type="STRING" id="557598.LHK_00186"/>
<dbReference type="GeneID" id="75109545"/>
<dbReference type="KEGG" id="lhk:LHK_00186"/>
<dbReference type="eggNOG" id="COG0131">
    <property type="taxonomic scope" value="Bacteria"/>
</dbReference>
<dbReference type="HOGENOM" id="CLU_044308_3_0_4"/>
<dbReference type="UniPathway" id="UPA00031">
    <property type="reaction ID" value="UER00011"/>
</dbReference>
<dbReference type="Proteomes" id="UP000002010">
    <property type="component" value="Chromosome"/>
</dbReference>
<dbReference type="GO" id="GO:0005737">
    <property type="term" value="C:cytoplasm"/>
    <property type="evidence" value="ECO:0007669"/>
    <property type="project" value="UniProtKB-SubCell"/>
</dbReference>
<dbReference type="GO" id="GO:0004424">
    <property type="term" value="F:imidazoleglycerol-phosphate dehydratase activity"/>
    <property type="evidence" value="ECO:0007669"/>
    <property type="project" value="UniProtKB-UniRule"/>
</dbReference>
<dbReference type="GO" id="GO:0000105">
    <property type="term" value="P:L-histidine biosynthetic process"/>
    <property type="evidence" value="ECO:0007669"/>
    <property type="project" value="UniProtKB-UniRule"/>
</dbReference>
<dbReference type="CDD" id="cd07914">
    <property type="entry name" value="IGPD"/>
    <property type="match status" value="1"/>
</dbReference>
<dbReference type="FunFam" id="3.30.230.40:FF:000002">
    <property type="entry name" value="Imidazoleglycerol-phosphate dehydratase"/>
    <property type="match status" value="1"/>
</dbReference>
<dbReference type="FunFam" id="3.30.230.40:FF:000003">
    <property type="entry name" value="Imidazoleglycerol-phosphate dehydratase HisB"/>
    <property type="match status" value="1"/>
</dbReference>
<dbReference type="Gene3D" id="3.30.230.40">
    <property type="entry name" value="Imidazole glycerol phosphate dehydratase, domain 1"/>
    <property type="match status" value="2"/>
</dbReference>
<dbReference type="HAMAP" id="MF_00076">
    <property type="entry name" value="HisB"/>
    <property type="match status" value="1"/>
</dbReference>
<dbReference type="InterPro" id="IPR038494">
    <property type="entry name" value="IGPD_sf"/>
</dbReference>
<dbReference type="InterPro" id="IPR000807">
    <property type="entry name" value="ImidazoleglycerolP_deHydtase"/>
</dbReference>
<dbReference type="InterPro" id="IPR020565">
    <property type="entry name" value="ImidazoleglycerP_deHydtase_CS"/>
</dbReference>
<dbReference type="InterPro" id="IPR020568">
    <property type="entry name" value="Ribosomal_Su5_D2-typ_SF"/>
</dbReference>
<dbReference type="NCBIfam" id="NF002106">
    <property type="entry name" value="PRK00951.1-1"/>
    <property type="match status" value="1"/>
</dbReference>
<dbReference type="NCBIfam" id="NF002109">
    <property type="entry name" value="PRK00951.1-5"/>
    <property type="match status" value="1"/>
</dbReference>
<dbReference type="NCBIfam" id="NF002111">
    <property type="entry name" value="PRK00951.2-1"/>
    <property type="match status" value="1"/>
</dbReference>
<dbReference type="NCBIfam" id="NF002114">
    <property type="entry name" value="PRK00951.2-4"/>
    <property type="match status" value="1"/>
</dbReference>
<dbReference type="PANTHER" id="PTHR23133:SF2">
    <property type="entry name" value="IMIDAZOLEGLYCEROL-PHOSPHATE DEHYDRATASE"/>
    <property type="match status" value="1"/>
</dbReference>
<dbReference type="PANTHER" id="PTHR23133">
    <property type="entry name" value="IMIDAZOLEGLYCEROL-PHOSPHATE DEHYDRATASE HIS7"/>
    <property type="match status" value="1"/>
</dbReference>
<dbReference type="Pfam" id="PF00475">
    <property type="entry name" value="IGPD"/>
    <property type="match status" value="1"/>
</dbReference>
<dbReference type="SUPFAM" id="SSF54211">
    <property type="entry name" value="Ribosomal protein S5 domain 2-like"/>
    <property type="match status" value="2"/>
</dbReference>
<dbReference type="PROSITE" id="PS00954">
    <property type="entry name" value="IGP_DEHYDRATASE_1"/>
    <property type="match status" value="1"/>
</dbReference>
<dbReference type="PROSITE" id="PS00955">
    <property type="entry name" value="IGP_DEHYDRATASE_2"/>
    <property type="match status" value="1"/>
</dbReference>
<accession>C1DAK1</accession>